<feature type="chain" id="PRO_1000024344" description="Cation/acetate symporter ActP">
    <location>
        <begin position="1"/>
        <end position="551"/>
    </location>
</feature>
<feature type="transmembrane region" description="Helical" evidence="1">
    <location>
        <begin position="5"/>
        <end position="25"/>
    </location>
</feature>
<feature type="transmembrane region" description="Helical" evidence="1">
    <location>
        <begin position="34"/>
        <end position="54"/>
    </location>
</feature>
<feature type="transmembrane region" description="Helical" evidence="1">
    <location>
        <begin position="77"/>
        <end position="97"/>
    </location>
</feature>
<feature type="transmembrane region" description="Helical" evidence="1">
    <location>
        <begin position="104"/>
        <end position="124"/>
    </location>
</feature>
<feature type="transmembrane region" description="Helical" evidence="1">
    <location>
        <begin position="150"/>
        <end position="170"/>
    </location>
</feature>
<feature type="transmembrane region" description="Helical" evidence="1">
    <location>
        <begin position="184"/>
        <end position="204"/>
    </location>
</feature>
<feature type="transmembrane region" description="Helical" evidence="1">
    <location>
        <begin position="207"/>
        <end position="227"/>
    </location>
</feature>
<feature type="transmembrane region" description="Helical" evidence="1">
    <location>
        <begin position="263"/>
        <end position="283"/>
    </location>
</feature>
<feature type="transmembrane region" description="Helical" evidence="1">
    <location>
        <begin position="304"/>
        <end position="324"/>
    </location>
</feature>
<feature type="transmembrane region" description="Helical" evidence="1">
    <location>
        <begin position="356"/>
        <end position="376"/>
    </location>
</feature>
<feature type="transmembrane region" description="Helical" evidence="1">
    <location>
        <begin position="406"/>
        <end position="426"/>
    </location>
</feature>
<feature type="transmembrane region" description="Helical" evidence="1">
    <location>
        <begin position="430"/>
        <end position="450"/>
    </location>
</feature>
<feature type="transmembrane region" description="Helical" evidence="1">
    <location>
        <begin position="469"/>
        <end position="489"/>
    </location>
</feature>
<feature type="transmembrane region" description="Helical" evidence="1">
    <location>
        <begin position="498"/>
        <end position="518"/>
    </location>
</feature>
<dbReference type="EMBL" id="CP000308">
    <property type="protein sequence ID" value="ABG15994.1"/>
    <property type="molecule type" value="Genomic_DNA"/>
</dbReference>
<dbReference type="RefSeq" id="WP_002209029.1">
    <property type="nucleotide sequence ID" value="NZ_CP009906.1"/>
</dbReference>
<dbReference type="SMR" id="Q1C0M8"/>
<dbReference type="GeneID" id="57974352"/>
<dbReference type="KEGG" id="ypa:YPA_4033"/>
<dbReference type="Proteomes" id="UP000001971">
    <property type="component" value="Chromosome"/>
</dbReference>
<dbReference type="GO" id="GO:0005886">
    <property type="term" value="C:plasma membrane"/>
    <property type="evidence" value="ECO:0007669"/>
    <property type="project" value="UniProtKB-SubCell"/>
</dbReference>
<dbReference type="GO" id="GO:0015123">
    <property type="term" value="F:acetate transmembrane transporter activity"/>
    <property type="evidence" value="ECO:0007669"/>
    <property type="project" value="UniProtKB-UniRule"/>
</dbReference>
<dbReference type="GO" id="GO:0043879">
    <property type="term" value="F:glycolate transmembrane transporter activity"/>
    <property type="evidence" value="ECO:0007669"/>
    <property type="project" value="InterPro"/>
</dbReference>
<dbReference type="GO" id="GO:0015293">
    <property type="term" value="F:symporter activity"/>
    <property type="evidence" value="ECO:0007669"/>
    <property type="project" value="UniProtKB-KW"/>
</dbReference>
<dbReference type="GO" id="GO:0006847">
    <property type="term" value="P:plasma membrane acetate transport"/>
    <property type="evidence" value="ECO:0007669"/>
    <property type="project" value="TreeGrafter"/>
</dbReference>
<dbReference type="GO" id="GO:0006814">
    <property type="term" value="P:sodium ion transport"/>
    <property type="evidence" value="ECO:0007669"/>
    <property type="project" value="UniProtKB-KW"/>
</dbReference>
<dbReference type="CDD" id="cd11480">
    <property type="entry name" value="SLC5sbd_u4"/>
    <property type="match status" value="1"/>
</dbReference>
<dbReference type="FunFam" id="1.20.1730.10:FF:000001">
    <property type="entry name" value="Cation/acetate symporter ActP"/>
    <property type="match status" value="1"/>
</dbReference>
<dbReference type="Gene3D" id="1.20.1730.10">
    <property type="entry name" value="Sodium/glucose cotransporter"/>
    <property type="match status" value="1"/>
</dbReference>
<dbReference type="HAMAP" id="MF_01426">
    <property type="entry name" value="Acet_symport_ActP"/>
    <property type="match status" value="1"/>
</dbReference>
<dbReference type="InterPro" id="IPR014083">
    <property type="entry name" value="Cation/Ac_symporter_ActP"/>
</dbReference>
<dbReference type="InterPro" id="IPR038377">
    <property type="entry name" value="Na/Glc_symporter_sf"/>
</dbReference>
<dbReference type="InterPro" id="IPR001734">
    <property type="entry name" value="Na/solute_symporter"/>
</dbReference>
<dbReference type="InterPro" id="IPR018212">
    <property type="entry name" value="Na/solute_symporter_CS"/>
</dbReference>
<dbReference type="InterPro" id="IPR050277">
    <property type="entry name" value="Sodium:Solute_Symporter"/>
</dbReference>
<dbReference type="NCBIfam" id="NF006903">
    <property type="entry name" value="PRK09395.1"/>
    <property type="match status" value="1"/>
</dbReference>
<dbReference type="NCBIfam" id="NF009135">
    <property type="entry name" value="PRK12488.1"/>
    <property type="match status" value="1"/>
</dbReference>
<dbReference type="NCBIfam" id="TIGR00813">
    <property type="entry name" value="sss"/>
    <property type="match status" value="1"/>
</dbReference>
<dbReference type="NCBIfam" id="TIGR02711">
    <property type="entry name" value="symport_actP"/>
    <property type="match status" value="1"/>
</dbReference>
<dbReference type="PANTHER" id="PTHR48086:SF6">
    <property type="entry name" value="CATION_ACETATE SYMPORTER ACTP"/>
    <property type="match status" value="1"/>
</dbReference>
<dbReference type="PANTHER" id="PTHR48086">
    <property type="entry name" value="SODIUM/PROLINE SYMPORTER-RELATED"/>
    <property type="match status" value="1"/>
</dbReference>
<dbReference type="Pfam" id="PF00474">
    <property type="entry name" value="SSF"/>
    <property type="match status" value="1"/>
</dbReference>
<dbReference type="PROSITE" id="PS00456">
    <property type="entry name" value="NA_SOLUT_SYMP_1"/>
    <property type="match status" value="1"/>
</dbReference>
<dbReference type="PROSITE" id="PS50283">
    <property type="entry name" value="NA_SOLUT_SYMP_3"/>
    <property type="match status" value="1"/>
</dbReference>
<reference key="1">
    <citation type="journal article" date="2006" name="J. Bacteriol.">
        <title>Complete genome sequence of Yersinia pestis strains Antiqua and Nepal516: evidence of gene reduction in an emerging pathogen.</title>
        <authorList>
            <person name="Chain P.S.G."/>
            <person name="Hu P."/>
            <person name="Malfatti S.A."/>
            <person name="Radnedge L."/>
            <person name="Larimer F."/>
            <person name="Vergez L.M."/>
            <person name="Worsham P."/>
            <person name="Chu M.C."/>
            <person name="Andersen G.L."/>
        </authorList>
    </citation>
    <scope>NUCLEOTIDE SEQUENCE [LARGE SCALE GENOMIC DNA]</scope>
    <source>
        <strain>Antiqua</strain>
    </source>
</reference>
<comment type="function">
    <text evidence="1">Transports acetate.</text>
</comment>
<comment type="subcellular location">
    <subcellularLocation>
        <location evidence="1">Cell inner membrane</location>
        <topology evidence="1">Multi-pass membrane protein</topology>
    </subcellularLocation>
</comment>
<comment type="similarity">
    <text evidence="1">Belongs to the sodium:solute symporter (SSF) (TC 2.A.21) family.</text>
</comment>
<name>ACTP_YERPA</name>
<accession>Q1C0M8</accession>
<evidence type="ECO:0000255" key="1">
    <source>
        <dbReference type="HAMAP-Rule" id="MF_01426"/>
    </source>
</evidence>
<sequence>MKIRHWSALSLFVLPALAQAEALTGEVHRQPLNIQAIVMFLLFVGGTLYITYWASKRTRSRQDYYTAGGRITGFQNGLAIAGDYMSAASFLGISALVYASGYDGLIYSIGFLIGWPIILFLIAERLRNLGRYTFADVASYRLQQRPIRTLSACGSLVVVALYLIAQMVGAGKLIQLLFGLNYHVAVVLVGILMVLYVLFGGMLATTWVQIIKAVMLLSGATFMAIMVMKSVNFNFNTLFSEAVKVHPKGLSIMSPGGLVSDPISALSLGLALMFGTAGLPHILMRFFTVSDAKEARKSVFYATGFIGYFYILTFIIGFGAILLVGPNQTFKDAAGALLGGNNMAAVHLANAVGGSFFLGFISAVAFATILAVVAGLTLAGASAVSHDLYASVIKKGKANERDELRVSKITVIILGIVAIGLGILFENQNIAFMVGLAFSIAASCNFPIIIISMYWDKLTTRGAMIGGWLGLSTAVILMILGPTIWVTILGHEKPIYPYEYPALFSMIAAFVGTWFFSITDNSETGKQERLLFKSQFVRSQTGLGASKGGAH</sequence>
<protein>
    <recommendedName>
        <fullName evidence="1">Cation/acetate symporter ActP</fullName>
    </recommendedName>
    <alternativeName>
        <fullName evidence="1">Acetate permease</fullName>
    </alternativeName>
    <alternativeName>
        <fullName evidence="1">Acetate transporter ActP</fullName>
    </alternativeName>
</protein>
<gene>
    <name evidence="1" type="primary">actP</name>
    <name type="ordered locus">YPA_4033</name>
</gene>
<proteinExistence type="inferred from homology"/>
<organism>
    <name type="scientific">Yersinia pestis bv. Antiqua (strain Antiqua)</name>
    <dbReference type="NCBI Taxonomy" id="360102"/>
    <lineage>
        <taxon>Bacteria</taxon>
        <taxon>Pseudomonadati</taxon>
        <taxon>Pseudomonadota</taxon>
        <taxon>Gammaproteobacteria</taxon>
        <taxon>Enterobacterales</taxon>
        <taxon>Yersiniaceae</taxon>
        <taxon>Yersinia</taxon>
    </lineage>
</organism>
<keyword id="KW-0997">Cell inner membrane</keyword>
<keyword id="KW-1003">Cell membrane</keyword>
<keyword id="KW-0406">Ion transport</keyword>
<keyword id="KW-0472">Membrane</keyword>
<keyword id="KW-0915">Sodium</keyword>
<keyword id="KW-0739">Sodium transport</keyword>
<keyword id="KW-0769">Symport</keyword>
<keyword id="KW-0812">Transmembrane</keyword>
<keyword id="KW-1133">Transmembrane helix</keyword>
<keyword id="KW-0813">Transport</keyword>